<comment type="function">
    <text evidence="1">Catalyzes the attachment of tyrosine to tRNA(Tyr) in a two-step reaction: tyrosine is first activated by ATP to form Tyr-AMP and then transferred to the acceptor end of tRNA(Tyr).</text>
</comment>
<comment type="catalytic activity">
    <reaction evidence="1">
        <text>tRNA(Tyr) + L-tyrosine + ATP = L-tyrosyl-tRNA(Tyr) + AMP + diphosphate + H(+)</text>
        <dbReference type="Rhea" id="RHEA:10220"/>
        <dbReference type="Rhea" id="RHEA-COMP:9706"/>
        <dbReference type="Rhea" id="RHEA-COMP:9707"/>
        <dbReference type="ChEBI" id="CHEBI:15378"/>
        <dbReference type="ChEBI" id="CHEBI:30616"/>
        <dbReference type="ChEBI" id="CHEBI:33019"/>
        <dbReference type="ChEBI" id="CHEBI:58315"/>
        <dbReference type="ChEBI" id="CHEBI:78442"/>
        <dbReference type="ChEBI" id="CHEBI:78536"/>
        <dbReference type="ChEBI" id="CHEBI:456215"/>
        <dbReference type="EC" id="6.1.1.1"/>
    </reaction>
</comment>
<comment type="subunit">
    <text evidence="1">Homodimer.</text>
</comment>
<comment type="subcellular location">
    <subcellularLocation>
        <location evidence="1">Cytoplasm</location>
    </subcellularLocation>
</comment>
<comment type="similarity">
    <text evidence="1">Belongs to the class-I aminoacyl-tRNA synthetase family. TyrS type 1 subfamily.</text>
</comment>
<gene>
    <name evidence="1" type="primary">tyrS</name>
    <name type="ordered locus">NWMN_1622</name>
</gene>
<keyword id="KW-0002">3D-structure</keyword>
<keyword id="KW-0030">Aminoacyl-tRNA synthetase</keyword>
<keyword id="KW-0067">ATP-binding</keyword>
<keyword id="KW-0963">Cytoplasm</keyword>
<keyword id="KW-0436">Ligase</keyword>
<keyword id="KW-0547">Nucleotide-binding</keyword>
<keyword id="KW-0648">Protein biosynthesis</keyword>
<keyword id="KW-0694">RNA-binding</keyword>
<protein>
    <recommendedName>
        <fullName evidence="1">Tyrosine--tRNA ligase</fullName>
        <ecNumber evidence="1">6.1.1.1</ecNumber>
    </recommendedName>
    <alternativeName>
        <fullName evidence="1">Tyrosyl-tRNA synthetase</fullName>
        <shortName evidence="1">TyrRS</shortName>
    </alternativeName>
</protein>
<name>SYY_STAAE</name>
<organism>
    <name type="scientific">Staphylococcus aureus (strain Newman)</name>
    <dbReference type="NCBI Taxonomy" id="426430"/>
    <lineage>
        <taxon>Bacteria</taxon>
        <taxon>Bacillati</taxon>
        <taxon>Bacillota</taxon>
        <taxon>Bacilli</taxon>
        <taxon>Bacillales</taxon>
        <taxon>Staphylococcaceae</taxon>
        <taxon>Staphylococcus</taxon>
    </lineage>
</organism>
<dbReference type="EC" id="6.1.1.1" evidence="1"/>
<dbReference type="EMBL" id="AP009351">
    <property type="protein sequence ID" value="BAF67894.1"/>
    <property type="molecule type" value="Genomic_DNA"/>
</dbReference>
<dbReference type="RefSeq" id="WP_000186029.1">
    <property type="nucleotide sequence ID" value="NZ_JBBIAE010000009.1"/>
</dbReference>
<dbReference type="PDB" id="1JII">
    <property type="method" value="X-ray"/>
    <property type="resolution" value="3.20 A"/>
    <property type="chains" value="A=1-420"/>
</dbReference>
<dbReference type="PDB" id="1JIJ">
    <property type="method" value="X-ray"/>
    <property type="resolution" value="3.20 A"/>
    <property type="chains" value="A=1-420"/>
</dbReference>
<dbReference type="PDB" id="1JIK">
    <property type="method" value="X-ray"/>
    <property type="resolution" value="2.80 A"/>
    <property type="chains" value="A=1-420"/>
</dbReference>
<dbReference type="PDB" id="1JIL">
    <property type="method" value="X-ray"/>
    <property type="resolution" value="2.20 A"/>
    <property type="chains" value="A=1-420"/>
</dbReference>
<dbReference type="PDBsum" id="1JII"/>
<dbReference type="PDBsum" id="1JIJ"/>
<dbReference type="PDBsum" id="1JIK"/>
<dbReference type="PDBsum" id="1JIL"/>
<dbReference type="SMR" id="A6QHR2"/>
<dbReference type="KEGG" id="sae:NWMN_1622"/>
<dbReference type="HOGENOM" id="CLU_024003_0_3_9"/>
<dbReference type="BRENDA" id="6.1.1.1">
    <property type="organism ID" value="3352"/>
</dbReference>
<dbReference type="EvolutionaryTrace" id="A6QHR2"/>
<dbReference type="Proteomes" id="UP000006386">
    <property type="component" value="Chromosome"/>
</dbReference>
<dbReference type="GO" id="GO:0005829">
    <property type="term" value="C:cytosol"/>
    <property type="evidence" value="ECO:0007669"/>
    <property type="project" value="TreeGrafter"/>
</dbReference>
<dbReference type="GO" id="GO:0005524">
    <property type="term" value="F:ATP binding"/>
    <property type="evidence" value="ECO:0007669"/>
    <property type="project" value="UniProtKB-UniRule"/>
</dbReference>
<dbReference type="GO" id="GO:0003723">
    <property type="term" value="F:RNA binding"/>
    <property type="evidence" value="ECO:0007669"/>
    <property type="project" value="UniProtKB-KW"/>
</dbReference>
<dbReference type="GO" id="GO:0004831">
    <property type="term" value="F:tyrosine-tRNA ligase activity"/>
    <property type="evidence" value="ECO:0007669"/>
    <property type="project" value="UniProtKB-UniRule"/>
</dbReference>
<dbReference type="GO" id="GO:0006437">
    <property type="term" value="P:tyrosyl-tRNA aminoacylation"/>
    <property type="evidence" value="ECO:0007669"/>
    <property type="project" value="UniProtKB-UniRule"/>
</dbReference>
<dbReference type="CDD" id="cd00165">
    <property type="entry name" value="S4"/>
    <property type="match status" value="1"/>
</dbReference>
<dbReference type="CDD" id="cd00395">
    <property type="entry name" value="Tyr_Trp_RS_core"/>
    <property type="match status" value="1"/>
</dbReference>
<dbReference type="DisProt" id="DP02035"/>
<dbReference type="FunFam" id="1.10.240.10:FF:000001">
    <property type="entry name" value="Tyrosine--tRNA ligase"/>
    <property type="match status" value="1"/>
</dbReference>
<dbReference type="FunFam" id="3.10.290.10:FF:000012">
    <property type="entry name" value="Tyrosine--tRNA ligase"/>
    <property type="match status" value="1"/>
</dbReference>
<dbReference type="FunFam" id="3.40.50.620:FF:000008">
    <property type="entry name" value="Tyrosine--tRNA ligase"/>
    <property type="match status" value="1"/>
</dbReference>
<dbReference type="Gene3D" id="3.40.50.620">
    <property type="entry name" value="HUPs"/>
    <property type="match status" value="1"/>
</dbReference>
<dbReference type="Gene3D" id="3.10.290.10">
    <property type="entry name" value="RNA-binding S4 domain"/>
    <property type="match status" value="1"/>
</dbReference>
<dbReference type="Gene3D" id="1.10.240.10">
    <property type="entry name" value="Tyrosyl-Transfer RNA Synthetase"/>
    <property type="match status" value="1"/>
</dbReference>
<dbReference type="HAMAP" id="MF_02006">
    <property type="entry name" value="Tyr_tRNA_synth_type1"/>
    <property type="match status" value="1"/>
</dbReference>
<dbReference type="InterPro" id="IPR001412">
    <property type="entry name" value="aa-tRNA-synth_I_CS"/>
</dbReference>
<dbReference type="InterPro" id="IPR002305">
    <property type="entry name" value="aa-tRNA-synth_Ic"/>
</dbReference>
<dbReference type="InterPro" id="IPR014729">
    <property type="entry name" value="Rossmann-like_a/b/a_fold"/>
</dbReference>
<dbReference type="InterPro" id="IPR002942">
    <property type="entry name" value="S4_RNA-bd"/>
</dbReference>
<dbReference type="InterPro" id="IPR036986">
    <property type="entry name" value="S4_RNA-bd_sf"/>
</dbReference>
<dbReference type="InterPro" id="IPR054608">
    <property type="entry name" value="SYY-like_C"/>
</dbReference>
<dbReference type="InterPro" id="IPR002307">
    <property type="entry name" value="Tyr-tRNA-ligase"/>
</dbReference>
<dbReference type="InterPro" id="IPR024088">
    <property type="entry name" value="Tyr-tRNA-ligase_bac-type"/>
</dbReference>
<dbReference type="InterPro" id="IPR024107">
    <property type="entry name" value="Tyr-tRNA-ligase_bac_1"/>
</dbReference>
<dbReference type="NCBIfam" id="TIGR00234">
    <property type="entry name" value="tyrS"/>
    <property type="match status" value="1"/>
</dbReference>
<dbReference type="PANTHER" id="PTHR11766:SF0">
    <property type="entry name" value="TYROSINE--TRNA LIGASE, MITOCHONDRIAL"/>
    <property type="match status" value="1"/>
</dbReference>
<dbReference type="PANTHER" id="PTHR11766">
    <property type="entry name" value="TYROSYL-TRNA SYNTHETASE"/>
    <property type="match status" value="1"/>
</dbReference>
<dbReference type="Pfam" id="PF22421">
    <property type="entry name" value="SYY_C-terminal"/>
    <property type="match status" value="1"/>
</dbReference>
<dbReference type="Pfam" id="PF00579">
    <property type="entry name" value="tRNA-synt_1b"/>
    <property type="match status" value="1"/>
</dbReference>
<dbReference type="PRINTS" id="PR01040">
    <property type="entry name" value="TRNASYNTHTYR"/>
</dbReference>
<dbReference type="SMART" id="SM00363">
    <property type="entry name" value="S4"/>
    <property type="match status" value="1"/>
</dbReference>
<dbReference type="SUPFAM" id="SSF55174">
    <property type="entry name" value="Alpha-L RNA-binding motif"/>
    <property type="match status" value="1"/>
</dbReference>
<dbReference type="SUPFAM" id="SSF52374">
    <property type="entry name" value="Nucleotidylyl transferase"/>
    <property type="match status" value="1"/>
</dbReference>
<dbReference type="PROSITE" id="PS00178">
    <property type="entry name" value="AA_TRNA_LIGASE_I"/>
    <property type="match status" value="1"/>
</dbReference>
<dbReference type="PROSITE" id="PS50889">
    <property type="entry name" value="S4"/>
    <property type="match status" value="1"/>
</dbReference>
<sequence>MTNVLIEDLKWRGLIYQQTDEQGIEDLLNKEQVTLYCGADPTADSLHIGHLLPFLTLRRFQEHGHRPIVLIGGGTGMIGDPSGKSEERVLQTEEQVDKNIEGISKQMHNIFEFGTDHGAVLVNNRDWLGQISLISFLRDYGKHVGVNYMLGKDSIQSRLEHGISYTEFTYTILQAIDFGHLNRELNCKIQVGGSDQWGNITSGIELMRRMYGQTDAYGLTIPLVTKSDGKKFGKSESGAVWLDAEKTSPYEFYQFWINQSDEDVIKFLKYFTFLGKEEIDRLEQSKNEAPHLREAQKTLAEEVTKFIHGEDALNDAIRISQALFSGDLKSLSAKELKDGFKDVPQVTLSNDTTNIVEVLIETGISPSKRQAREDVNNGAIYINGERQQDVNYALAPEDKIDGEFTIIRRGKKKYFMVNYQ</sequence>
<evidence type="ECO:0000255" key="1">
    <source>
        <dbReference type="HAMAP-Rule" id="MF_02006"/>
    </source>
</evidence>
<evidence type="ECO:0007829" key="2">
    <source>
        <dbReference type="PDB" id="1JII"/>
    </source>
</evidence>
<evidence type="ECO:0007829" key="3">
    <source>
        <dbReference type="PDB" id="1JIJ"/>
    </source>
</evidence>
<evidence type="ECO:0007829" key="4">
    <source>
        <dbReference type="PDB" id="1JIL"/>
    </source>
</evidence>
<feature type="chain" id="PRO_1000088630" description="Tyrosine--tRNA ligase">
    <location>
        <begin position="1"/>
        <end position="420"/>
    </location>
</feature>
<feature type="domain" description="S4 RNA-binding" evidence="1">
    <location>
        <begin position="353"/>
        <end position="420"/>
    </location>
</feature>
<feature type="short sequence motif" description="'HIGH' region">
    <location>
        <begin position="41"/>
        <end position="50"/>
    </location>
</feature>
<feature type="short sequence motif" description="'KMSKS' region">
    <location>
        <begin position="231"/>
        <end position="235"/>
    </location>
</feature>
<feature type="binding site" evidence="1">
    <location>
        <position position="36"/>
    </location>
    <ligand>
        <name>L-tyrosine</name>
        <dbReference type="ChEBI" id="CHEBI:58315"/>
    </ligand>
</feature>
<feature type="binding site" evidence="1">
    <location>
        <position position="170"/>
    </location>
    <ligand>
        <name>L-tyrosine</name>
        <dbReference type="ChEBI" id="CHEBI:58315"/>
    </ligand>
</feature>
<feature type="binding site" evidence="1">
    <location>
        <position position="174"/>
    </location>
    <ligand>
        <name>L-tyrosine</name>
        <dbReference type="ChEBI" id="CHEBI:58315"/>
    </ligand>
</feature>
<feature type="binding site" evidence="1">
    <location>
        <position position="234"/>
    </location>
    <ligand>
        <name>ATP</name>
        <dbReference type="ChEBI" id="CHEBI:30616"/>
    </ligand>
</feature>
<feature type="helix" evidence="4">
    <location>
        <begin position="4"/>
        <end position="11"/>
    </location>
</feature>
<feature type="strand" evidence="2">
    <location>
        <begin position="16"/>
        <end position="20"/>
    </location>
</feature>
<feature type="helix" evidence="4">
    <location>
        <begin position="21"/>
        <end position="30"/>
    </location>
</feature>
<feature type="strand" evidence="4">
    <location>
        <begin position="34"/>
        <end position="39"/>
    </location>
</feature>
<feature type="strand" evidence="4">
    <location>
        <begin position="42"/>
        <end position="45"/>
    </location>
</feature>
<feature type="helix" evidence="4">
    <location>
        <begin position="48"/>
        <end position="62"/>
    </location>
</feature>
<feature type="strand" evidence="4">
    <location>
        <begin position="66"/>
        <end position="71"/>
    </location>
</feature>
<feature type="helix" evidence="4">
    <location>
        <begin position="75"/>
        <end position="77"/>
    </location>
</feature>
<feature type="helix" evidence="4">
    <location>
        <begin position="93"/>
        <end position="110"/>
    </location>
</feature>
<feature type="strand" evidence="4">
    <location>
        <begin position="114"/>
        <end position="118"/>
    </location>
</feature>
<feature type="strand" evidence="4">
    <location>
        <begin position="120"/>
        <end position="123"/>
    </location>
</feature>
<feature type="helix" evidence="4">
    <location>
        <begin position="125"/>
        <end position="128"/>
    </location>
</feature>
<feature type="helix" evidence="4">
    <location>
        <begin position="133"/>
        <end position="139"/>
    </location>
</feature>
<feature type="helix" evidence="4">
    <location>
        <begin position="141"/>
        <end position="143"/>
    </location>
</feature>
<feature type="helix" evidence="4">
    <location>
        <begin position="146"/>
        <end position="150"/>
    </location>
</feature>
<feature type="helix" evidence="4">
    <location>
        <begin position="153"/>
        <end position="155"/>
    </location>
</feature>
<feature type="helix" evidence="4">
    <location>
        <begin position="156"/>
        <end position="159"/>
    </location>
</feature>
<feature type="turn" evidence="4">
    <location>
        <begin position="160"/>
        <end position="162"/>
    </location>
</feature>
<feature type="helix" evidence="4">
    <location>
        <begin position="165"/>
        <end position="185"/>
    </location>
</feature>
<feature type="strand" evidence="4">
    <location>
        <begin position="187"/>
        <end position="193"/>
    </location>
</feature>
<feature type="helix" evidence="4">
    <location>
        <begin position="194"/>
        <end position="196"/>
    </location>
</feature>
<feature type="helix" evidence="4">
    <location>
        <begin position="197"/>
        <end position="211"/>
    </location>
</feature>
<feature type="strand" evidence="4">
    <location>
        <begin position="217"/>
        <end position="221"/>
    </location>
</feature>
<feature type="strand" evidence="3">
    <location>
        <begin position="227"/>
        <end position="229"/>
    </location>
</feature>
<feature type="strand" evidence="4">
    <location>
        <begin position="236"/>
        <end position="239"/>
    </location>
</feature>
<feature type="strand" evidence="4">
    <location>
        <begin position="241"/>
        <end position="243"/>
    </location>
</feature>
<feature type="turn" evidence="4">
    <location>
        <begin position="244"/>
        <end position="246"/>
    </location>
</feature>
<feature type="helix" evidence="4">
    <location>
        <begin position="249"/>
        <end position="257"/>
    </location>
</feature>
<feature type="helix" evidence="4">
    <location>
        <begin position="261"/>
        <end position="271"/>
    </location>
</feature>
<feature type="helix" evidence="4">
    <location>
        <begin position="276"/>
        <end position="288"/>
    </location>
</feature>
<feature type="helix" evidence="4">
    <location>
        <begin position="290"/>
        <end position="292"/>
    </location>
</feature>
<feature type="helix" evidence="4">
    <location>
        <begin position="294"/>
        <end position="308"/>
    </location>
</feature>
<feature type="helix" evidence="4">
    <location>
        <begin position="310"/>
        <end position="323"/>
    </location>
</feature>
<reference key="1">
    <citation type="journal article" date="2008" name="J. Bacteriol.">
        <title>Genome sequence of Staphylococcus aureus strain Newman and comparative analysis of staphylococcal genomes: polymorphism and evolution of two major pathogenicity islands.</title>
        <authorList>
            <person name="Baba T."/>
            <person name="Bae T."/>
            <person name="Schneewind O."/>
            <person name="Takeuchi F."/>
            <person name="Hiramatsu K."/>
        </authorList>
    </citation>
    <scope>NUCLEOTIDE SEQUENCE [LARGE SCALE GENOMIC DNA]</scope>
    <source>
        <strain>Newman</strain>
    </source>
</reference>
<accession>A6QHR2</accession>
<proteinExistence type="evidence at protein level"/>